<comment type="function">
    <text>Part of a capsular polysaccharide synthesis locus.</text>
</comment>
<comment type="miscellaneous">
    <text>Stealth proteins are part of a protein family that is conserved from bacteria to higher eukaryotes. Family members were first identified in microbes as proteins that help pathogens to elude the host innate immune system. Microbial stealth proteins are involved in the biosynthesis of exopolysaccharides. Stealth proteins are predicted to function as hexose-1-phosphoryltransferases.</text>
</comment>
<comment type="similarity">
    <text evidence="1">Belongs to the stealth family.</text>
</comment>
<protein>
    <recommendedName>
        <fullName>Capsular polysaccharide phosphotransferase cps1A</fullName>
        <ecNumber>2.7.-.-</ecNumber>
    </recommendedName>
    <alternativeName>
        <fullName>Stealth protein cps1A</fullName>
    </alternativeName>
</protein>
<sequence length="364" mass="43244">MTKMNRKFSKLLKNPHIFFRDFLNKKYPIKNTELPFSESEEANLIEANQKLDKIIQKNTLQQTNIDVVFTWVDGSDPSWQAKYSQYAPNYQAKSALYATDIARFEDHNELYYSVHAVLKYMPWVRHIFIITDNQKPKWLDETRQEKITLIDHQDIIDKEYLPTFNSHVIEAFLHKIPNLSENFIYFNDDVFIARELQAEHFFQANGIASIFMSEKSLTQMRNRGTITPTLSASEYSIRLLNKYYNTNIDSPLVHTYIPLKKSMYELAWRRYEKEILGFLPNKFRTNNDLNFANFLIPWLMYFEGKAMPKIDICYYFNIRSPNALTQYKKLLNKKNIGEQLIHFAQMILIVKKVLTTIKINCFLF</sequence>
<feature type="chain" id="PRO_0000235940" description="Capsular polysaccharide phosphotransferase cps1A">
    <location>
        <begin position="1"/>
        <end position="364"/>
    </location>
</feature>
<evidence type="ECO:0000305" key="1"/>
<organism>
    <name type="scientific">Actinobacillus pleuropneumoniae</name>
    <name type="common">Haemophilus pleuropneumoniae</name>
    <dbReference type="NCBI Taxonomy" id="715"/>
    <lineage>
        <taxon>Bacteria</taxon>
        <taxon>Pseudomonadati</taxon>
        <taxon>Pseudomonadota</taxon>
        <taxon>Gammaproteobacteria</taxon>
        <taxon>Pasteurellales</taxon>
        <taxon>Pasteurellaceae</taxon>
        <taxon>Actinobacillus</taxon>
    </lineage>
</organism>
<accession>Q8KSB4</accession>
<gene>
    <name type="primary">cps1A</name>
</gene>
<keyword id="KW-0270">Exopolysaccharide synthesis</keyword>
<keyword id="KW-0808">Transferase</keyword>
<name>CPS1_ACTPL</name>
<proteinExistence type="inferred from homology"/>
<dbReference type="EC" id="2.7.-.-"/>
<dbReference type="EMBL" id="AF518558">
    <property type="protein sequence ID" value="AAM69355.1"/>
    <property type="molecule type" value="Genomic_DNA"/>
</dbReference>
<dbReference type="SMR" id="Q8KSB4"/>
<dbReference type="GO" id="GO:0016772">
    <property type="term" value="F:transferase activity, transferring phosphorus-containing groups"/>
    <property type="evidence" value="ECO:0007669"/>
    <property type="project" value="InterPro"/>
</dbReference>
<dbReference type="GO" id="GO:0000271">
    <property type="term" value="P:polysaccharide biosynthetic process"/>
    <property type="evidence" value="ECO:0007669"/>
    <property type="project" value="UniProtKB-KW"/>
</dbReference>
<dbReference type="InterPro" id="IPR047141">
    <property type="entry name" value="Stealth"/>
</dbReference>
<dbReference type="InterPro" id="IPR031358">
    <property type="entry name" value="Stealth_CR1"/>
</dbReference>
<dbReference type="InterPro" id="IPR021520">
    <property type="entry name" value="Stealth_CR2"/>
</dbReference>
<dbReference type="PANTHER" id="PTHR24045">
    <property type="match status" value="1"/>
</dbReference>
<dbReference type="PANTHER" id="PTHR24045:SF0">
    <property type="entry name" value="N-ACETYLGLUCOSAMINE-1-PHOSPHOTRANSFERASE SUBUNITS ALPHA_BETA"/>
    <property type="match status" value="1"/>
</dbReference>
<dbReference type="Pfam" id="PF17101">
    <property type="entry name" value="Stealth_CR1"/>
    <property type="match status" value="1"/>
</dbReference>
<dbReference type="Pfam" id="PF11380">
    <property type="entry name" value="Stealth_CR2"/>
    <property type="match status" value="1"/>
</dbReference>
<reference key="1">
    <citation type="journal article" date="2003" name="Infect. Immun.">
        <title>Association of Actinobacillus pleuropneumoniae capsular polysaccharide with virulence in pigs.</title>
        <authorList>
            <person name="Bandara A.B."/>
            <person name="Lawrence M.L."/>
            <person name="Veit H.P."/>
            <person name="Inzana T.J."/>
        </authorList>
    </citation>
    <scope>NUCLEOTIDE SEQUENCE [GENOMIC DNA]</scope>
    <source>
        <strain>ATCC 27088 / DSM 13472 / CCM 5869 / S4074 / Serotype 1</strain>
    </source>
</reference>
<reference key="2">
    <citation type="journal article" date="2005" name="PLoS Comput. Biol.">
        <title>Stealth proteins: in silico identification of a novel protein family rendering bacterial pathogens invisible to host immune defense.</title>
        <authorList>
            <person name="Sperisen P."/>
            <person name="Schmid C.D."/>
            <person name="Bucher P."/>
            <person name="Zilian O."/>
        </authorList>
    </citation>
    <scope>IDENTIFICATION AS A STEALTH PROTEIN</scope>
    <scope>PREDICTION OF FUNCTION</scope>
</reference>